<organism>
    <name type="scientific">Flavobacterium psychrophilum (strain ATCC 49511 / DSM 21280 / CIP 103535 / JIP02/86)</name>
    <dbReference type="NCBI Taxonomy" id="402612"/>
    <lineage>
        <taxon>Bacteria</taxon>
        <taxon>Pseudomonadati</taxon>
        <taxon>Bacteroidota</taxon>
        <taxon>Flavobacteriia</taxon>
        <taxon>Flavobacteriales</taxon>
        <taxon>Flavobacteriaceae</taxon>
        <taxon>Flavobacterium</taxon>
    </lineage>
</organism>
<protein>
    <recommendedName>
        <fullName evidence="1">Large ribosomal subunit protein bL35</fullName>
    </recommendedName>
    <alternativeName>
        <fullName evidence="3">50S ribosomal protein L35</fullName>
    </alternativeName>
</protein>
<reference key="1">
    <citation type="journal article" date="2007" name="Nat. Biotechnol.">
        <title>Complete genome sequence of the fish pathogen Flavobacterium psychrophilum.</title>
        <authorList>
            <person name="Duchaud E."/>
            <person name="Boussaha M."/>
            <person name="Loux V."/>
            <person name="Bernardet J.-F."/>
            <person name="Michel C."/>
            <person name="Kerouault B."/>
            <person name="Mondot S."/>
            <person name="Nicolas P."/>
            <person name="Bossy R."/>
            <person name="Caron C."/>
            <person name="Bessieres P."/>
            <person name="Gibrat J.-F."/>
            <person name="Claverol S."/>
            <person name="Dumetz F."/>
            <person name="Le Henaff M."/>
            <person name="Benmansour A."/>
        </authorList>
    </citation>
    <scope>NUCLEOTIDE SEQUENCE [LARGE SCALE GENOMIC DNA]</scope>
    <source>
        <strain>ATCC 49511 / DSM 21280 / CIP 103535 / JIP02/86</strain>
    </source>
</reference>
<name>RL35_FLAPJ</name>
<dbReference type="EMBL" id="AM398681">
    <property type="protein sequence ID" value="CAL42993.1"/>
    <property type="molecule type" value="Genomic_DNA"/>
</dbReference>
<dbReference type="RefSeq" id="WP_011963049.1">
    <property type="nucleotide sequence ID" value="NC_009613.3"/>
</dbReference>
<dbReference type="RefSeq" id="YP_001295809.1">
    <property type="nucleotide sequence ID" value="NC_009613.3"/>
</dbReference>
<dbReference type="SMR" id="A6GY20"/>
<dbReference type="STRING" id="402612.FP0893"/>
<dbReference type="EnsemblBacteria" id="CAL42993">
    <property type="protein sequence ID" value="CAL42993"/>
    <property type="gene ID" value="FP0893"/>
</dbReference>
<dbReference type="GeneID" id="66552485"/>
<dbReference type="KEGG" id="fps:FP0893"/>
<dbReference type="PATRIC" id="fig|402612.5.peg.910"/>
<dbReference type="eggNOG" id="COG0291">
    <property type="taxonomic scope" value="Bacteria"/>
</dbReference>
<dbReference type="HOGENOM" id="CLU_169643_1_1_10"/>
<dbReference type="OrthoDB" id="47476at2"/>
<dbReference type="Proteomes" id="UP000006394">
    <property type="component" value="Chromosome"/>
</dbReference>
<dbReference type="GO" id="GO:0022625">
    <property type="term" value="C:cytosolic large ribosomal subunit"/>
    <property type="evidence" value="ECO:0007669"/>
    <property type="project" value="TreeGrafter"/>
</dbReference>
<dbReference type="GO" id="GO:0003735">
    <property type="term" value="F:structural constituent of ribosome"/>
    <property type="evidence" value="ECO:0007669"/>
    <property type="project" value="InterPro"/>
</dbReference>
<dbReference type="GO" id="GO:0006412">
    <property type="term" value="P:translation"/>
    <property type="evidence" value="ECO:0007669"/>
    <property type="project" value="UniProtKB-UniRule"/>
</dbReference>
<dbReference type="FunFam" id="4.10.410.60:FF:000001">
    <property type="entry name" value="50S ribosomal protein L35"/>
    <property type="match status" value="1"/>
</dbReference>
<dbReference type="Gene3D" id="4.10.410.60">
    <property type="match status" value="1"/>
</dbReference>
<dbReference type="HAMAP" id="MF_00514">
    <property type="entry name" value="Ribosomal_bL35"/>
    <property type="match status" value="1"/>
</dbReference>
<dbReference type="InterPro" id="IPR001706">
    <property type="entry name" value="Ribosomal_bL35"/>
</dbReference>
<dbReference type="InterPro" id="IPR021137">
    <property type="entry name" value="Ribosomal_bL35-like"/>
</dbReference>
<dbReference type="InterPro" id="IPR018265">
    <property type="entry name" value="Ribosomal_bL35_CS"/>
</dbReference>
<dbReference type="InterPro" id="IPR037229">
    <property type="entry name" value="Ribosomal_bL35_sf"/>
</dbReference>
<dbReference type="NCBIfam" id="TIGR00001">
    <property type="entry name" value="rpmI_bact"/>
    <property type="match status" value="1"/>
</dbReference>
<dbReference type="PANTHER" id="PTHR33343">
    <property type="entry name" value="54S RIBOSOMAL PROTEIN BL35M"/>
    <property type="match status" value="1"/>
</dbReference>
<dbReference type="PANTHER" id="PTHR33343:SF1">
    <property type="entry name" value="LARGE RIBOSOMAL SUBUNIT PROTEIN BL35M"/>
    <property type="match status" value="1"/>
</dbReference>
<dbReference type="Pfam" id="PF01632">
    <property type="entry name" value="Ribosomal_L35p"/>
    <property type="match status" value="1"/>
</dbReference>
<dbReference type="PRINTS" id="PR00064">
    <property type="entry name" value="RIBOSOMALL35"/>
</dbReference>
<dbReference type="SUPFAM" id="SSF143034">
    <property type="entry name" value="L35p-like"/>
    <property type="match status" value="1"/>
</dbReference>
<dbReference type="PROSITE" id="PS00936">
    <property type="entry name" value="RIBOSOMAL_L35"/>
    <property type="match status" value="1"/>
</dbReference>
<comment type="similarity">
    <text evidence="1">Belongs to the bacterial ribosomal protein bL35 family.</text>
</comment>
<accession>A6GY20</accession>
<sequence>MPKMKTKSSAKKRFKVTGSGKIKRKHAFKSHILTKKSKKRKLALTHSALVHATDMKSIKQQLRII</sequence>
<feature type="chain" id="PRO_1000050688" description="Large ribosomal subunit protein bL35">
    <location>
        <begin position="1"/>
        <end position="65"/>
    </location>
</feature>
<feature type="region of interest" description="Disordered" evidence="2">
    <location>
        <begin position="1"/>
        <end position="22"/>
    </location>
</feature>
<proteinExistence type="inferred from homology"/>
<keyword id="KW-1185">Reference proteome</keyword>
<keyword id="KW-0687">Ribonucleoprotein</keyword>
<keyword id="KW-0689">Ribosomal protein</keyword>
<evidence type="ECO:0000255" key="1">
    <source>
        <dbReference type="HAMAP-Rule" id="MF_00514"/>
    </source>
</evidence>
<evidence type="ECO:0000256" key="2">
    <source>
        <dbReference type="SAM" id="MobiDB-lite"/>
    </source>
</evidence>
<evidence type="ECO:0000305" key="3"/>
<gene>
    <name evidence="1" type="primary">rpmI</name>
    <name type="ordered locus">FP0893</name>
</gene>